<comment type="function">
    <text evidence="1">Catalyzes both the decarboxylative condensation of pimeloyl-[acyl-carrier protein] and L-alanine to produce 8-amino-7-oxononanoate (AON), [acyl-carrier protein], and carbon dioxide, and the transformation of pimelate into pimeloyl-CoA with concomitant hydrolysis of ATP to AMP.</text>
</comment>
<comment type="catalytic activity">
    <reaction>
        <text>heptanedioate + ATP + CoA = 6-carboxyhexanoyl-CoA + AMP + diphosphate</text>
        <dbReference type="Rhea" id="RHEA:14781"/>
        <dbReference type="ChEBI" id="CHEBI:30616"/>
        <dbReference type="ChEBI" id="CHEBI:33019"/>
        <dbReference type="ChEBI" id="CHEBI:36165"/>
        <dbReference type="ChEBI" id="CHEBI:57287"/>
        <dbReference type="ChEBI" id="CHEBI:57360"/>
        <dbReference type="ChEBI" id="CHEBI:456215"/>
        <dbReference type="EC" id="6.2.1.14"/>
    </reaction>
</comment>
<comment type="catalytic activity">
    <reaction>
        <text>6-carboxyhexanoyl-[ACP] + L-alanine + H(+) = (8S)-8-amino-7-oxononanoate + holo-[ACP] + CO2</text>
        <dbReference type="Rhea" id="RHEA:42288"/>
        <dbReference type="Rhea" id="RHEA-COMP:9685"/>
        <dbReference type="Rhea" id="RHEA-COMP:9955"/>
        <dbReference type="ChEBI" id="CHEBI:15378"/>
        <dbReference type="ChEBI" id="CHEBI:16526"/>
        <dbReference type="ChEBI" id="CHEBI:57972"/>
        <dbReference type="ChEBI" id="CHEBI:64479"/>
        <dbReference type="ChEBI" id="CHEBI:78846"/>
        <dbReference type="ChEBI" id="CHEBI:149468"/>
        <dbReference type="EC" id="2.3.1.47"/>
    </reaction>
</comment>
<comment type="cofactor">
    <cofactor evidence="1">
        <name>Mg(2+)</name>
        <dbReference type="ChEBI" id="CHEBI:18420"/>
    </cofactor>
</comment>
<comment type="cofactor">
    <cofactor evidence="1">
        <name>pyridoxal 5'-phosphate</name>
        <dbReference type="ChEBI" id="CHEBI:597326"/>
    </cofactor>
</comment>
<comment type="pathway">
    <text>Metabolic intermediate metabolism; pimeloyl-CoA biosynthesis; pimeloyl-CoA from pimelate: step 1/1.</text>
</comment>
<comment type="pathway">
    <text>Cofactor biosynthesis; biotin biosynthesis.</text>
</comment>
<comment type="subunit">
    <text evidence="1">Homodimer.</text>
</comment>
<comment type="similarity">
    <text evidence="2">In the N-terminal section; belongs to the BioW family.</text>
</comment>
<comment type="similarity">
    <text evidence="2">In the C-terminal section; belongs to the class-II pyridoxal-phosphate-dependent aminotransferase family. BioF subfamily.</text>
</comment>
<organism>
    <name type="scientific">Cutibacterium acnes (strain DSM 16379 / KPA171202)</name>
    <name type="common">Propionibacterium acnes</name>
    <dbReference type="NCBI Taxonomy" id="267747"/>
    <lineage>
        <taxon>Bacteria</taxon>
        <taxon>Bacillati</taxon>
        <taxon>Actinomycetota</taxon>
        <taxon>Actinomycetes</taxon>
        <taxon>Propionibacteriales</taxon>
        <taxon>Propionibacteriaceae</taxon>
        <taxon>Cutibacterium</taxon>
    </lineage>
</organism>
<name>BIOWF_CUTAK</name>
<dbReference type="EC" id="6.2.1.14"/>
<dbReference type="EC" id="2.3.1.47"/>
<dbReference type="EMBL" id="AE017283">
    <property type="protein sequence ID" value="AAT83589.1"/>
    <property type="molecule type" value="Genomic_DNA"/>
</dbReference>
<dbReference type="SMR" id="Q6A6M4"/>
<dbReference type="EnsemblBacteria" id="AAT83589">
    <property type="protein sequence ID" value="AAT83589"/>
    <property type="gene ID" value="PPA1866"/>
</dbReference>
<dbReference type="KEGG" id="pac:PPA1866"/>
<dbReference type="eggNOG" id="COG0156">
    <property type="taxonomic scope" value="Bacteria"/>
</dbReference>
<dbReference type="HOGENOM" id="CLU_028958_0_0_11"/>
<dbReference type="UniPathway" id="UPA00078"/>
<dbReference type="UniPathway" id="UPA00999">
    <property type="reaction ID" value="UER00351"/>
</dbReference>
<dbReference type="Proteomes" id="UP000000603">
    <property type="component" value="Chromosome"/>
</dbReference>
<dbReference type="GO" id="GO:0042410">
    <property type="term" value="F:6-carboxyhexanoate-CoA ligase activity"/>
    <property type="evidence" value="ECO:0007669"/>
    <property type="project" value="UniProtKB-EC"/>
</dbReference>
<dbReference type="GO" id="GO:0008710">
    <property type="term" value="F:8-amino-7-oxononanoate synthase activity"/>
    <property type="evidence" value="ECO:0007669"/>
    <property type="project" value="UniProtKB-EC"/>
</dbReference>
<dbReference type="GO" id="GO:0005524">
    <property type="term" value="F:ATP binding"/>
    <property type="evidence" value="ECO:0007669"/>
    <property type="project" value="UniProtKB-KW"/>
</dbReference>
<dbReference type="GO" id="GO:0030170">
    <property type="term" value="F:pyridoxal phosphate binding"/>
    <property type="evidence" value="ECO:0007669"/>
    <property type="project" value="InterPro"/>
</dbReference>
<dbReference type="GO" id="GO:0009102">
    <property type="term" value="P:biotin biosynthetic process"/>
    <property type="evidence" value="ECO:0007669"/>
    <property type="project" value="UniProtKB-UniPathway"/>
</dbReference>
<dbReference type="Gene3D" id="3.90.1150.10">
    <property type="entry name" value="Aspartate Aminotransferase, domain 1"/>
    <property type="match status" value="1"/>
</dbReference>
<dbReference type="Gene3D" id="3.40.640.10">
    <property type="entry name" value="Type I PLP-dependent aspartate aminotransferase-like (Major domain)"/>
    <property type="match status" value="1"/>
</dbReference>
<dbReference type="InterPro" id="IPR004839">
    <property type="entry name" value="Aminotransferase_I/II_large"/>
</dbReference>
<dbReference type="InterPro" id="IPR050087">
    <property type="entry name" value="AON_synthase_class-II"/>
</dbReference>
<dbReference type="InterPro" id="IPR005499">
    <property type="entry name" value="BioW"/>
</dbReference>
<dbReference type="InterPro" id="IPR015424">
    <property type="entry name" value="PyrdxlP-dep_Trfase"/>
</dbReference>
<dbReference type="InterPro" id="IPR015421">
    <property type="entry name" value="PyrdxlP-dep_Trfase_major"/>
</dbReference>
<dbReference type="InterPro" id="IPR015422">
    <property type="entry name" value="PyrdxlP-dep_Trfase_small"/>
</dbReference>
<dbReference type="PANTHER" id="PTHR13693:SF100">
    <property type="entry name" value="8-AMINO-7-OXONONANOATE SYNTHASE"/>
    <property type="match status" value="1"/>
</dbReference>
<dbReference type="PANTHER" id="PTHR13693">
    <property type="entry name" value="CLASS II AMINOTRANSFERASE/8-AMINO-7-OXONONANOATE SYNTHASE"/>
    <property type="match status" value="1"/>
</dbReference>
<dbReference type="Pfam" id="PF00155">
    <property type="entry name" value="Aminotran_1_2"/>
    <property type="match status" value="1"/>
</dbReference>
<dbReference type="Pfam" id="PF03744">
    <property type="entry name" value="BioW"/>
    <property type="match status" value="1"/>
</dbReference>
<dbReference type="SUPFAM" id="SSF53383">
    <property type="entry name" value="PLP-dependent transferases"/>
    <property type="match status" value="1"/>
</dbReference>
<sequence length="653" mass="69153">MLSQNPTTVAWWSVRMRATGTLDDEPYHVSGAESLVAPGMIEQTVAGLTQRALAPGHTVKARQVRVSLDQLDVEPTIIPALPTELKECPDPVAARQYFVDVLSRFVPHPAEALRVLTEGPTMRGAAMVEAGTDRRLEADPLRGVRVTKFGDLTESAPGASLAHKKHHHEAVLLASKVAAAPGVLAEFCISDDPHYTRGYVCVDGVYTTVTNVKADGDPNGGRVILVDTARADPTTITTWLENHPVLIGPATASSQKATSWHGHLCGRLNAWRAAGLERRPRTFCSAQDPDAVTTDGPALLFSSSDYLGLSTEPKVQQAMNNTVRRLGSSSGGSRLTTGTSVAHHQAEHEIAAWLGYPQAVFMASGYQANIATIQLLADPHVTVISDAENHASLIDGCRLARARTVVVPHADLDAIDTALDCVTTDRALVLTEGVYSMGGDVAPVGELVEIAHRHGALVVVDDAHGIGTVGPTGRGATEELPASQRPDVLLGTASKALGVEGGFACVDETLATLMRNCARGYVFSSAPSPVVAAGVAAAVEYLRTDTRRVCSLQANVAQARLLLAEADLIPPSAAHDRGPIIRIPVGPESRAVAAQEELARRGLMVGAIRYPAVARGDAILRICLTARHTDEHIRILVTSLREVLDGALSDAPR</sequence>
<feature type="chain" id="PRO_0000412105" description="Biotin biosynthesis bifunctional protein BioWF">
    <location>
        <begin position="1"/>
        <end position="653"/>
    </location>
</feature>
<feature type="binding site" evidence="1">
    <location>
        <position position="278"/>
    </location>
    <ligand>
        <name>substrate</name>
    </ligand>
</feature>
<feature type="binding site" evidence="1">
    <location>
        <begin position="365"/>
        <end position="366"/>
    </location>
    <ligand>
        <name>pyridoxal 5'-phosphate</name>
        <dbReference type="ChEBI" id="CHEBI:597326"/>
    </ligand>
</feature>
<feature type="binding site" evidence="1">
    <location>
        <position position="390"/>
    </location>
    <ligand>
        <name>substrate</name>
    </ligand>
</feature>
<feature type="binding site" evidence="1">
    <location>
        <position position="436"/>
    </location>
    <ligand>
        <name>pyridoxal 5'-phosphate</name>
        <dbReference type="ChEBI" id="CHEBI:597326"/>
    </ligand>
</feature>
<feature type="binding site" evidence="1">
    <location>
        <begin position="461"/>
        <end position="464"/>
    </location>
    <ligand>
        <name>pyridoxal 5'-phosphate</name>
        <dbReference type="ChEBI" id="CHEBI:597326"/>
    </ligand>
</feature>
<feature type="binding site" evidence="1">
    <location>
        <begin position="492"/>
        <end position="495"/>
    </location>
    <ligand>
        <name>pyridoxal 5'-phosphate</name>
        <dbReference type="ChEBI" id="CHEBI:597326"/>
    </ligand>
</feature>
<feature type="modified residue" description="N6-(pyridoxal phosphate)lysine" evidence="1">
    <location>
        <position position="495"/>
    </location>
</feature>
<proteinExistence type="inferred from homology"/>
<accession>Q6A6M4</accession>
<evidence type="ECO:0000250" key="1"/>
<evidence type="ECO:0000305" key="2"/>
<reference key="1">
    <citation type="journal article" date="2004" name="Science">
        <title>The complete genome sequence of Propionibacterium acnes, a commensal of human skin.</title>
        <authorList>
            <person name="Brueggemann H."/>
            <person name="Henne A."/>
            <person name="Hoster F."/>
            <person name="Liesegang H."/>
            <person name="Wiezer A."/>
            <person name="Strittmatter A."/>
            <person name="Hujer S."/>
            <person name="Duerre P."/>
            <person name="Gottschalk G."/>
        </authorList>
    </citation>
    <scope>NUCLEOTIDE SEQUENCE [LARGE SCALE GENOMIC DNA]</scope>
    <source>
        <strain>DSM 16379 / KPA171202</strain>
    </source>
</reference>
<gene>
    <name type="ordered locus">PPA1866</name>
</gene>
<protein>
    <recommendedName>
        <fullName>Biotin biosynthesis bifunctional protein BioWF</fullName>
    </recommendedName>
    <domain>
        <recommendedName>
            <fullName>6-carboxyhexanoate--CoA ligase</fullName>
            <ecNumber>6.2.1.14</ecNumber>
        </recommendedName>
        <alternativeName>
            <fullName>Pimeloyl-CoA synthase</fullName>
        </alternativeName>
    </domain>
    <domain>
        <recommendedName>
            <fullName>8-amino-7-oxononanoate synthase</fullName>
            <shortName>AONS</shortName>
            <ecNumber>2.3.1.47</ecNumber>
        </recommendedName>
        <alternativeName>
            <fullName>7-keto-8-amino-pelargonic acid synthase</fullName>
            <shortName>7-KAP synthase</shortName>
        </alternativeName>
        <alternativeName>
            <fullName>8-amino-7-ketopelargonate synthase</fullName>
        </alternativeName>
    </domain>
</protein>
<keyword id="KW-0067">ATP-binding</keyword>
<keyword id="KW-0093">Biotin biosynthesis</keyword>
<keyword id="KW-0436">Ligase</keyword>
<keyword id="KW-0460">Magnesium</keyword>
<keyword id="KW-0511">Multifunctional enzyme</keyword>
<keyword id="KW-0547">Nucleotide-binding</keyword>
<keyword id="KW-0663">Pyridoxal phosphate</keyword>
<keyword id="KW-0808">Transferase</keyword>